<comment type="function">
    <text evidence="1">Catalyzes the attachment of threonine to tRNA(Thr) in a two-step reaction: L-threonine is first activated by ATP to form Thr-AMP and then transferred to the acceptor end of tRNA(Thr). Also edits incorrectly charged L-seryl-tRNA(Thr).</text>
</comment>
<comment type="catalytic activity">
    <reaction evidence="1">
        <text>tRNA(Thr) + L-threonine + ATP = L-threonyl-tRNA(Thr) + AMP + diphosphate + H(+)</text>
        <dbReference type="Rhea" id="RHEA:24624"/>
        <dbReference type="Rhea" id="RHEA-COMP:9670"/>
        <dbReference type="Rhea" id="RHEA-COMP:9704"/>
        <dbReference type="ChEBI" id="CHEBI:15378"/>
        <dbReference type="ChEBI" id="CHEBI:30616"/>
        <dbReference type="ChEBI" id="CHEBI:33019"/>
        <dbReference type="ChEBI" id="CHEBI:57926"/>
        <dbReference type="ChEBI" id="CHEBI:78442"/>
        <dbReference type="ChEBI" id="CHEBI:78534"/>
        <dbReference type="ChEBI" id="CHEBI:456215"/>
        <dbReference type="EC" id="6.1.1.3"/>
    </reaction>
</comment>
<comment type="cofactor">
    <cofactor evidence="1">
        <name>Zn(2+)</name>
        <dbReference type="ChEBI" id="CHEBI:29105"/>
    </cofactor>
    <text evidence="1">Binds 1 zinc ion per subunit.</text>
</comment>
<comment type="subunit">
    <text evidence="1">Homodimer.</text>
</comment>
<comment type="subcellular location">
    <subcellularLocation>
        <location evidence="1">Cytoplasm</location>
    </subcellularLocation>
</comment>
<comment type="similarity">
    <text evidence="1">Belongs to the class-II aminoacyl-tRNA synthetase family.</text>
</comment>
<protein>
    <recommendedName>
        <fullName evidence="1">Threonine--tRNA ligase</fullName>
        <ecNumber evidence="1">6.1.1.3</ecNumber>
    </recommendedName>
    <alternativeName>
        <fullName evidence="1">Threonyl-tRNA synthetase</fullName>
        <shortName evidence="1">ThrRS</shortName>
    </alternativeName>
</protein>
<reference key="1">
    <citation type="journal article" date="2008" name="J. Biotechnol.">
        <title>The genome of Xanthomonas campestris pv. campestris B100 and its use for the reconstruction of metabolic pathways involved in xanthan biosynthesis.</title>
        <authorList>
            <person name="Vorhoelter F.-J."/>
            <person name="Schneiker S."/>
            <person name="Goesmann A."/>
            <person name="Krause L."/>
            <person name="Bekel T."/>
            <person name="Kaiser O."/>
            <person name="Linke B."/>
            <person name="Patschkowski T."/>
            <person name="Rueckert C."/>
            <person name="Schmid J."/>
            <person name="Sidhu V.K."/>
            <person name="Sieber V."/>
            <person name="Tauch A."/>
            <person name="Watt S.A."/>
            <person name="Weisshaar B."/>
            <person name="Becker A."/>
            <person name="Niehaus K."/>
            <person name="Puehler A."/>
        </authorList>
    </citation>
    <scope>NUCLEOTIDE SEQUENCE [LARGE SCALE GENOMIC DNA]</scope>
    <source>
        <strain>B100</strain>
    </source>
</reference>
<feature type="chain" id="PRO_1000098628" description="Threonine--tRNA ligase">
    <location>
        <begin position="1"/>
        <end position="636"/>
    </location>
</feature>
<feature type="domain" description="TGS" evidence="2">
    <location>
        <begin position="1"/>
        <end position="63"/>
    </location>
</feature>
<feature type="region of interest" description="Catalytic" evidence="1">
    <location>
        <begin position="245"/>
        <end position="536"/>
    </location>
</feature>
<feature type="binding site" evidence="1">
    <location>
        <position position="336"/>
    </location>
    <ligand>
        <name>Zn(2+)</name>
        <dbReference type="ChEBI" id="CHEBI:29105"/>
    </ligand>
</feature>
<feature type="binding site" evidence="1">
    <location>
        <position position="387"/>
    </location>
    <ligand>
        <name>Zn(2+)</name>
        <dbReference type="ChEBI" id="CHEBI:29105"/>
    </ligand>
</feature>
<feature type="binding site" evidence="1">
    <location>
        <position position="513"/>
    </location>
    <ligand>
        <name>Zn(2+)</name>
        <dbReference type="ChEBI" id="CHEBI:29105"/>
    </ligand>
</feature>
<evidence type="ECO:0000255" key="1">
    <source>
        <dbReference type="HAMAP-Rule" id="MF_00184"/>
    </source>
</evidence>
<evidence type="ECO:0000255" key="2">
    <source>
        <dbReference type="PROSITE-ProRule" id="PRU01228"/>
    </source>
</evidence>
<accession>B0RRG9</accession>
<sequence length="636" mass="72002">MPMITITLPDGSRREFDAPVSVMQVAQSIGAGLAKATIAGQVDGQLVDASDLIEHDASLRIITAKDAEGVEIIRHSCAHLVGHAVKQLYPDVKMVIGPVIAEGFYYDIYSERPFTPEDMAAIEQRMQQLIAQDYDVIKKVTPRAEVIEVFAQRGEEYKLRLIEDMSDDITAMGLYYHQEYVDMCRGPHVPNTRFLKAFKLTRISGAYWRGDAKNEQLQRIYGTAWADKKQLDAYILRMEEADKRDHRKIGKAQDLFHLQEEAPGLVFWHPKGWSLWQVVEQYMRKVYRDSGYGEVRCPQILDVSLWQKSGHWDNYQDAMFFTESEKRTYAVKPMNCPGHVQVFNQGLHSYRDLPIRYGEFGACHRNEPSGALHGILRVRGFTQDDGHVFCLESQIEAEVTAFHQQALAVYTAFGFDDIQIKIALRPEKRLGDDATWDKAEAALRSALGVCGVEWQELPGEGAFYGPKIEYHLKDAIGRTWQLGTMQVDFMMPGRLGAEYVDEHSQKKHPVMLHRAIVGSMERFIGILIEHHAGAFPAWLAPVQVVVANITDAQAEYVDSVRKTLANQGFRVSADLRNEKIGYKIREHTLQRVPYLLVVGDREKENGAVAVRTRSGEDLGTMTVSAFIERLQAEQAA</sequence>
<name>SYT_XANCB</name>
<keyword id="KW-0030">Aminoacyl-tRNA synthetase</keyword>
<keyword id="KW-0067">ATP-binding</keyword>
<keyword id="KW-0963">Cytoplasm</keyword>
<keyword id="KW-0436">Ligase</keyword>
<keyword id="KW-0479">Metal-binding</keyword>
<keyword id="KW-0547">Nucleotide-binding</keyword>
<keyword id="KW-0648">Protein biosynthesis</keyword>
<keyword id="KW-0694">RNA-binding</keyword>
<keyword id="KW-0820">tRNA-binding</keyword>
<keyword id="KW-0862">Zinc</keyword>
<organism>
    <name type="scientific">Xanthomonas campestris pv. campestris (strain B100)</name>
    <dbReference type="NCBI Taxonomy" id="509169"/>
    <lineage>
        <taxon>Bacteria</taxon>
        <taxon>Pseudomonadati</taxon>
        <taxon>Pseudomonadota</taxon>
        <taxon>Gammaproteobacteria</taxon>
        <taxon>Lysobacterales</taxon>
        <taxon>Lysobacteraceae</taxon>
        <taxon>Xanthomonas</taxon>
    </lineage>
</organism>
<proteinExistence type="inferred from homology"/>
<gene>
    <name evidence="1" type="primary">thrS</name>
    <name type="ordered locus">xcc-b100_1704</name>
</gene>
<dbReference type="EC" id="6.1.1.3" evidence="1"/>
<dbReference type="EMBL" id="AM920689">
    <property type="protein sequence ID" value="CAP51054.1"/>
    <property type="molecule type" value="Genomic_DNA"/>
</dbReference>
<dbReference type="SMR" id="B0RRG9"/>
<dbReference type="KEGG" id="xca:xcc-b100_1704"/>
<dbReference type="HOGENOM" id="CLU_008554_0_1_6"/>
<dbReference type="Proteomes" id="UP000001188">
    <property type="component" value="Chromosome"/>
</dbReference>
<dbReference type="GO" id="GO:0005829">
    <property type="term" value="C:cytosol"/>
    <property type="evidence" value="ECO:0007669"/>
    <property type="project" value="TreeGrafter"/>
</dbReference>
<dbReference type="GO" id="GO:0005524">
    <property type="term" value="F:ATP binding"/>
    <property type="evidence" value="ECO:0007669"/>
    <property type="project" value="UniProtKB-UniRule"/>
</dbReference>
<dbReference type="GO" id="GO:0046872">
    <property type="term" value="F:metal ion binding"/>
    <property type="evidence" value="ECO:0007669"/>
    <property type="project" value="UniProtKB-KW"/>
</dbReference>
<dbReference type="GO" id="GO:0004829">
    <property type="term" value="F:threonine-tRNA ligase activity"/>
    <property type="evidence" value="ECO:0007669"/>
    <property type="project" value="UniProtKB-UniRule"/>
</dbReference>
<dbReference type="GO" id="GO:0000049">
    <property type="term" value="F:tRNA binding"/>
    <property type="evidence" value="ECO:0007669"/>
    <property type="project" value="UniProtKB-KW"/>
</dbReference>
<dbReference type="GO" id="GO:0006435">
    <property type="term" value="P:threonyl-tRNA aminoacylation"/>
    <property type="evidence" value="ECO:0007669"/>
    <property type="project" value="UniProtKB-UniRule"/>
</dbReference>
<dbReference type="CDD" id="cd01667">
    <property type="entry name" value="TGS_ThrRS"/>
    <property type="match status" value="1"/>
</dbReference>
<dbReference type="CDD" id="cd00860">
    <property type="entry name" value="ThrRS_anticodon"/>
    <property type="match status" value="1"/>
</dbReference>
<dbReference type="CDD" id="cd00771">
    <property type="entry name" value="ThrRS_core"/>
    <property type="match status" value="1"/>
</dbReference>
<dbReference type="FunFam" id="3.10.20.30:FF:000005">
    <property type="entry name" value="Threonine--tRNA ligase"/>
    <property type="match status" value="1"/>
</dbReference>
<dbReference type="FunFam" id="3.30.54.20:FF:000002">
    <property type="entry name" value="Threonine--tRNA ligase"/>
    <property type="match status" value="1"/>
</dbReference>
<dbReference type="FunFam" id="3.30.930.10:FF:000002">
    <property type="entry name" value="Threonine--tRNA ligase"/>
    <property type="match status" value="1"/>
</dbReference>
<dbReference type="FunFam" id="3.40.50.800:FF:000001">
    <property type="entry name" value="Threonine--tRNA ligase"/>
    <property type="match status" value="1"/>
</dbReference>
<dbReference type="FunFam" id="3.30.980.10:FF:000005">
    <property type="entry name" value="Threonyl-tRNA synthetase, mitochondrial"/>
    <property type="match status" value="1"/>
</dbReference>
<dbReference type="Gene3D" id="3.10.20.30">
    <property type="match status" value="1"/>
</dbReference>
<dbReference type="Gene3D" id="3.30.54.20">
    <property type="match status" value="1"/>
</dbReference>
<dbReference type="Gene3D" id="3.40.50.800">
    <property type="entry name" value="Anticodon-binding domain"/>
    <property type="match status" value="1"/>
</dbReference>
<dbReference type="Gene3D" id="3.30.930.10">
    <property type="entry name" value="Bira Bifunctional Protein, Domain 2"/>
    <property type="match status" value="1"/>
</dbReference>
<dbReference type="Gene3D" id="3.30.980.10">
    <property type="entry name" value="Threonyl-trna Synthetase, Chain A, domain 2"/>
    <property type="match status" value="1"/>
</dbReference>
<dbReference type="HAMAP" id="MF_00184">
    <property type="entry name" value="Thr_tRNA_synth"/>
    <property type="match status" value="1"/>
</dbReference>
<dbReference type="InterPro" id="IPR002314">
    <property type="entry name" value="aa-tRNA-synt_IIb"/>
</dbReference>
<dbReference type="InterPro" id="IPR006195">
    <property type="entry name" value="aa-tRNA-synth_II"/>
</dbReference>
<dbReference type="InterPro" id="IPR045864">
    <property type="entry name" value="aa-tRNA-synth_II/BPL/LPL"/>
</dbReference>
<dbReference type="InterPro" id="IPR004154">
    <property type="entry name" value="Anticodon-bd"/>
</dbReference>
<dbReference type="InterPro" id="IPR036621">
    <property type="entry name" value="Anticodon-bd_dom_sf"/>
</dbReference>
<dbReference type="InterPro" id="IPR012675">
    <property type="entry name" value="Beta-grasp_dom_sf"/>
</dbReference>
<dbReference type="InterPro" id="IPR004095">
    <property type="entry name" value="TGS"/>
</dbReference>
<dbReference type="InterPro" id="IPR012676">
    <property type="entry name" value="TGS-like"/>
</dbReference>
<dbReference type="InterPro" id="IPR002320">
    <property type="entry name" value="Thr-tRNA-ligase_IIa"/>
</dbReference>
<dbReference type="InterPro" id="IPR018163">
    <property type="entry name" value="Thr/Ala-tRNA-synth_IIc_edit"/>
</dbReference>
<dbReference type="InterPro" id="IPR047246">
    <property type="entry name" value="ThrRS_anticodon"/>
</dbReference>
<dbReference type="InterPro" id="IPR033728">
    <property type="entry name" value="ThrRS_core"/>
</dbReference>
<dbReference type="InterPro" id="IPR012947">
    <property type="entry name" value="tRNA_SAD"/>
</dbReference>
<dbReference type="NCBIfam" id="TIGR00418">
    <property type="entry name" value="thrS"/>
    <property type="match status" value="1"/>
</dbReference>
<dbReference type="PANTHER" id="PTHR11451:SF44">
    <property type="entry name" value="THREONINE--TRNA LIGASE, CHLOROPLASTIC_MITOCHONDRIAL 2"/>
    <property type="match status" value="1"/>
</dbReference>
<dbReference type="PANTHER" id="PTHR11451">
    <property type="entry name" value="THREONINE-TRNA LIGASE"/>
    <property type="match status" value="1"/>
</dbReference>
<dbReference type="Pfam" id="PF03129">
    <property type="entry name" value="HGTP_anticodon"/>
    <property type="match status" value="1"/>
</dbReference>
<dbReference type="Pfam" id="PF02824">
    <property type="entry name" value="TGS"/>
    <property type="match status" value="1"/>
</dbReference>
<dbReference type="Pfam" id="PF00587">
    <property type="entry name" value="tRNA-synt_2b"/>
    <property type="match status" value="1"/>
</dbReference>
<dbReference type="Pfam" id="PF07973">
    <property type="entry name" value="tRNA_SAD"/>
    <property type="match status" value="1"/>
</dbReference>
<dbReference type="PRINTS" id="PR01047">
    <property type="entry name" value="TRNASYNTHTHR"/>
</dbReference>
<dbReference type="SMART" id="SM00863">
    <property type="entry name" value="tRNA_SAD"/>
    <property type="match status" value="1"/>
</dbReference>
<dbReference type="SUPFAM" id="SSF52954">
    <property type="entry name" value="Class II aaRS ABD-related"/>
    <property type="match status" value="1"/>
</dbReference>
<dbReference type="SUPFAM" id="SSF55681">
    <property type="entry name" value="Class II aaRS and biotin synthetases"/>
    <property type="match status" value="1"/>
</dbReference>
<dbReference type="SUPFAM" id="SSF81271">
    <property type="entry name" value="TGS-like"/>
    <property type="match status" value="1"/>
</dbReference>
<dbReference type="SUPFAM" id="SSF55186">
    <property type="entry name" value="ThrRS/AlaRS common domain"/>
    <property type="match status" value="1"/>
</dbReference>
<dbReference type="PROSITE" id="PS50862">
    <property type="entry name" value="AA_TRNA_LIGASE_II"/>
    <property type="match status" value="1"/>
</dbReference>
<dbReference type="PROSITE" id="PS51880">
    <property type="entry name" value="TGS"/>
    <property type="match status" value="1"/>
</dbReference>